<comment type="function">
    <text evidence="1">Catalyzes the attachment of glutamate to tRNA(Glu) in a two-step reaction: glutamate is first activated by ATP to form Glu-AMP and then transferred to the acceptor end of tRNA(Glu).</text>
</comment>
<comment type="catalytic activity">
    <reaction evidence="1">
        <text>tRNA(Glu) + L-glutamate + ATP = L-glutamyl-tRNA(Glu) + AMP + diphosphate</text>
        <dbReference type="Rhea" id="RHEA:23540"/>
        <dbReference type="Rhea" id="RHEA-COMP:9663"/>
        <dbReference type="Rhea" id="RHEA-COMP:9680"/>
        <dbReference type="ChEBI" id="CHEBI:29985"/>
        <dbReference type="ChEBI" id="CHEBI:30616"/>
        <dbReference type="ChEBI" id="CHEBI:33019"/>
        <dbReference type="ChEBI" id="CHEBI:78442"/>
        <dbReference type="ChEBI" id="CHEBI:78520"/>
        <dbReference type="ChEBI" id="CHEBI:456215"/>
        <dbReference type="EC" id="6.1.1.17"/>
    </reaction>
</comment>
<comment type="subunit">
    <text evidence="1">Monomer.</text>
</comment>
<comment type="subcellular location">
    <subcellularLocation>
        <location evidence="1">Cytoplasm</location>
    </subcellularLocation>
</comment>
<comment type="similarity">
    <text evidence="1">Belongs to the class-I aminoacyl-tRNA synthetase family. Glutamate--tRNA ligase type 1 subfamily.</text>
</comment>
<proteinExistence type="inferred from homology"/>
<dbReference type="EC" id="6.1.1.17" evidence="1"/>
<dbReference type="EMBL" id="CP000868">
    <property type="protein sequence ID" value="ABX14908.1"/>
    <property type="molecule type" value="Genomic_DNA"/>
</dbReference>
<dbReference type="EMBL" id="AP009385">
    <property type="protein sequence ID" value="BAG43944.1"/>
    <property type="molecule type" value="Genomic_DNA"/>
</dbReference>
<dbReference type="RefSeq" id="WP_012213119.1">
    <property type="nucleotide sequence ID" value="NC_010084.1"/>
</dbReference>
<dbReference type="SMR" id="A9AHQ3"/>
<dbReference type="STRING" id="395019.BMULJ_02034"/>
<dbReference type="KEGG" id="bmj:BMULJ_02034"/>
<dbReference type="KEGG" id="bmu:Bmul_1220"/>
<dbReference type="eggNOG" id="COG0008">
    <property type="taxonomic scope" value="Bacteria"/>
</dbReference>
<dbReference type="HOGENOM" id="CLU_015768_6_1_4"/>
<dbReference type="Proteomes" id="UP000008815">
    <property type="component" value="Chromosome 1"/>
</dbReference>
<dbReference type="GO" id="GO:0005829">
    <property type="term" value="C:cytosol"/>
    <property type="evidence" value="ECO:0007669"/>
    <property type="project" value="TreeGrafter"/>
</dbReference>
<dbReference type="GO" id="GO:0005524">
    <property type="term" value="F:ATP binding"/>
    <property type="evidence" value="ECO:0007669"/>
    <property type="project" value="UniProtKB-UniRule"/>
</dbReference>
<dbReference type="GO" id="GO:0004818">
    <property type="term" value="F:glutamate-tRNA ligase activity"/>
    <property type="evidence" value="ECO:0007669"/>
    <property type="project" value="UniProtKB-UniRule"/>
</dbReference>
<dbReference type="GO" id="GO:0000049">
    <property type="term" value="F:tRNA binding"/>
    <property type="evidence" value="ECO:0007669"/>
    <property type="project" value="InterPro"/>
</dbReference>
<dbReference type="GO" id="GO:0008270">
    <property type="term" value="F:zinc ion binding"/>
    <property type="evidence" value="ECO:0007669"/>
    <property type="project" value="InterPro"/>
</dbReference>
<dbReference type="GO" id="GO:0006424">
    <property type="term" value="P:glutamyl-tRNA aminoacylation"/>
    <property type="evidence" value="ECO:0007669"/>
    <property type="project" value="UniProtKB-UniRule"/>
</dbReference>
<dbReference type="CDD" id="cd00808">
    <property type="entry name" value="GluRS_core"/>
    <property type="match status" value="1"/>
</dbReference>
<dbReference type="FunFam" id="3.40.50.620:FF:000007">
    <property type="entry name" value="Glutamate--tRNA ligase"/>
    <property type="match status" value="1"/>
</dbReference>
<dbReference type="Gene3D" id="1.10.10.350">
    <property type="match status" value="1"/>
</dbReference>
<dbReference type="Gene3D" id="3.40.50.620">
    <property type="entry name" value="HUPs"/>
    <property type="match status" value="1"/>
</dbReference>
<dbReference type="HAMAP" id="MF_00022">
    <property type="entry name" value="Glu_tRNA_synth_type1"/>
    <property type="match status" value="1"/>
</dbReference>
<dbReference type="InterPro" id="IPR045462">
    <property type="entry name" value="aa-tRNA-synth_I_cd-bd"/>
</dbReference>
<dbReference type="InterPro" id="IPR020751">
    <property type="entry name" value="aa-tRNA-synth_I_codon-bd_sub2"/>
</dbReference>
<dbReference type="InterPro" id="IPR001412">
    <property type="entry name" value="aa-tRNA-synth_I_CS"/>
</dbReference>
<dbReference type="InterPro" id="IPR008925">
    <property type="entry name" value="aa_tRNA-synth_I_cd-bd_sf"/>
</dbReference>
<dbReference type="InterPro" id="IPR004527">
    <property type="entry name" value="Glu-tRNA-ligase_bac/mito"/>
</dbReference>
<dbReference type="InterPro" id="IPR000924">
    <property type="entry name" value="Glu/Gln-tRNA-synth"/>
</dbReference>
<dbReference type="InterPro" id="IPR020058">
    <property type="entry name" value="Glu/Gln-tRNA-synth_Ib_cat-dom"/>
</dbReference>
<dbReference type="InterPro" id="IPR049940">
    <property type="entry name" value="GluQ/Sye"/>
</dbReference>
<dbReference type="InterPro" id="IPR033910">
    <property type="entry name" value="GluRS_core"/>
</dbReference>
<dbReference type="InterPro" id="IPR014729">
    <property type="entry name" value="Rossmann-like_a/b/a_fold"/>
</dbReference>
<dbReference type="NCBIfam" id="TIGR00464">
    <property type="entry name" value="gltX_bact"/>
    <property type="match status" value="1"/>
</dbReference>
<dbReference type="PANTHER" id="PTHR43311">
    <property type="entry name" value="GLUTAMATE--TRNA LIGASE"/>
    <property type="match status" value="1"/>
</dbReference>
<dbReference type="PANTHER" id="PTHR43311:SF2">
    <property type="entry name" value="GLUTAMATE--TRNA LIGASE, MITOCHONDRIAL-RELATED"/>
    <property type="match status" value="1"/>
</dbReference>
<dbReference type="Pfam" id="PF19269">
    <property type="entry name" value="Anticodon_2"/>
    <property type="match status" value="1"/>
</dbReference>
<dbReference type="Pfam" id="PF00749">
    <property type="entry name" value="tRNA-synt_1c"/>
    <property type="match status" value="1"/>
</dbReference>
<dbReference type="PRINTS" id="PR00987">
    <property type="entry name" value="TRNASYNTHGLU"/>
</dbReference>
<dbReference type="SUPFAM" id="SSF48163">
    <property type="entry name" value="An anticodon-binding domain of class I aminoacyl-tRNA synthetases"/>
    <property type="match status" value="1"/>
</dbReference>
<dbReference type="SUPFAM" id="SSF52374">
    <property type="entry name" value="Nucleotidylyl transferase"/>
    <property type="match status" value="1"/>
</dbReference>
<dbReference type="PROSITE" id="PS00178">
    <property type="entry name" value="AA_TRNA_LIGASE_I"/>
    <property type="match status" value="1"/>
</dbReference>
<protein>
    <recommendedName>
        <fullName evidence="1">Glutamate--tRNA ligase</fullName>
        <ecNumber evidence="1">6.1.1.17</ecNumber>
    </recommendedName>
    <alternativeName>
        <fullName evidence="1">Glutamyl-tRNA synthetase</fullName>
        <shortName evidence="1">GluRS</shortName>
    </alternativeName>
</protein>
<organism>
    <name type="scientific">Burkholderia multivorans (strain ATCC 17616 / 249)</name>
    <dbReference type="NCBI Taxonomy" id="395019"/>
    <lineage>
        <taxon>Bacteria</taxon>
        <taxon>Pseudomonadati</taxon>
        <taxon>Pseudomonadota</taxon>
        <taxon>Betaproteobacteria</taxon>
        <taxon>Burkholderiales</taxon>
        <taxon>Burkholderiaceae</taxon>
        <taxon>Burkholderia</taxon>
        <taxon>Burkholderia cepacia complex</taxon>
    </lineage>
</organism>
<keyword id="KW-0030">Aminoacyl-tRNA synthetase</keyword>
<keyword id="KW-0067">ATP-binding</keyword>
<keyword id="KW-0963">Cytoplasm</keyword>
<keyword id="KW-0436">Ligase</keyword>
<keyword id="KW-0547">Nucleotide-binding</keyword>
<keyword id="KW-0648">Protein biosynthesis</keyword>
<keyword id="KW-1185">Reference proteome</keyword>
<reference key="1">
    <citation type="submission" date="2007-10" db="EMBL/GenBank/DDBJ databases">
        <title>Complete sequence of chromosome 1 of Burkholderia multivorans ATCC 17616.</title>
        <authorList>
            <person name="Copeland A."/>
            <person name="Lucas S."/>
            <person name="Lapidus A."/>
            <person name="Barry K."/>
            <person name="Glavina del Rio T."/>
            <person name="Dalin E."/>
            <person name="Tice H."/>
            <person name="Pitluck S."/>
            <person name="Chain P."/>
            <person name="Malfatti S."/>
            <person name="Shin M."/>
            <person name="Vergez L."/>
            <person name="Schmutz J."/>
            <person name="Larimer F."/>
            <person name="Land M."/>
            <person name="Hauser L."/>
            <person name="Kyrpides N."/>
            <person name="Kim E."/>
            <person name="Tiedje J."/>
            <person name="Richardson P."/>
        </authorList>
    </citation>
    <scope>NUCLEOTIDE SEQUENCE [LARGE SCALE GENOMIC DNA]</scope>
    <source>
        <strain>ATCC 17616 / 249</strain>
    </source>
</reference>
<reference key="2">
    <citation type="submission" date="2007-04" db="EMBL/GenBank/DDBJ databases">
        <title>Complete genome sequence of Burkholderia multivorans ATCC 17616.</title>
        <authorList>
            <person name="Ohtsubo Y."/>
            <person name="Yamashita A."/>
            <person name="Kurokawa K."/>
            <person name="Takami H."/>
            <person name="Yuhara S."/>
            <person name="Nishiyama E."/>
            <person name="Endo R."/>
            <person name="Miyazaki R."/>
            <person name="Ono A."/>
            <person name="Yano K."/>
            <person name="Ito M."/>
            <person name="Sota M."/>
            <person name="Yuji N."/>
            <person name="Hattori M."/>
            <person name="Tsuda M."/>
        </authorList>
    </citation>
    <scope>NUCLEOTIDE SEQUENCE [LARGE SCALE GENOMIC DNA]</scope>
    <source>
        <strain>ATCC 17616 / 249</strain>
    </source>
</reference>
<gene>
    <name evidence="1" type="primary">gltX</name>
    <name type="ordered locus">Bmul_1220</name>
    <name type="ordered locus">BMULJ_02034</name>
</gene>
<sequence>MTRPVRTRFAPSPTGFIHLGNIRSALYPWAFARKMKGTFVLRIEDTDVERSSKEAVDAILEGMEWLGLDFDEGPIYQMQRMDRYREVLAQMLEKGLAYPCYMSAEELDALRERQRAAGLKPRYDGTWRPEPGKVLPEPPPGVKPVLRFRNPLTGTVAWDDAVKGRVEISNEELDDLVIARPDGTPIYNFCVVVDDMDMGITHVIRGDDHVNNTPRQINILRALGGEPPVYAHLPTVLNEQGEKMSKRHGAMSVMAYRDAGYLPEAVVNYLARLGWSHGDAEIFSREQFVEWFDLEHLGKSPAQYDHNKLNWLNAHYIKEADNARLAALAKPFLAALAIDDAALAAGPALEAVIALMKDRATTVKEIAEGAAMFYRVPAPDADALAQHVSDAVRPALADLAAALKAADWTKEAISAALKATLAAHKLKMPQLAMPVRLLVAGTTHTPSIDAVLALFDRDVVVSRIEAALA</sequence>
<name>SYE_BURM1</name>
<feature type="chain" id="PRO_1000090058" description="Glutamate--tRNA ligase">
    <location>
        <begin position="1"/>
        <end position="469"/>
    </location>
</feature>
<feature type="region of interest" description="Disordered" evidence="2">
    <location>
        <begin position="121"/>
        <end position="141"/>
    </location>
</feature>
<feature type="short sequence motif" description="'HIGH' region" evidence="1">
    <location>
        <begin position="11"/>
        <end position="21"/>
    </location>
</feature>
<feature type="short sequence motif" description="'KMSKS' region" evidence="1">
    <location>
        <begin position="243"/>
        <end position="247"/>
    </location>
</feature>
<feature type="compositionally biased region" description="Basic and acidic residues" evidence="2">
    <location>
        <begin position="121"/>
        <end position="131"/>
    </location>
</feature>
<feature type="binding site" evidence="1">
    <location>
        <position position="246"/>
    </location>
    <ligand>
        <name>ATP</name>
        <dbReference type="ChEBI" id="CHEBI:30616"/>
    </ligand>
</feature>
<evidence type="ECO:0000255" key="1">
    <source>
        <dbReference type="HAMAP-Rule" id="MF_00022"/>
    </source>
</evidence>
<evidence type="ECO:0000256" key="2">
    <source>
        <dbReference type="SAM" id="MobiDB-lite"/>
    </source>
</evidence>
<accession>A9AHQ3</accession>